<organism>
    <name type="scientific">Trimeresurus stejnegeri</name>
    <name type="common">Chinese green tree viper</name>
    <name type="synonym">Viridovipera stejnegeri</name>
    <dbReference type="NCBI Taxonomy" id="39682"/>
    <lineage>
        <taxon>Eukaryota</taxon>
        <taxon>Metazoa</taxon>
        <taxon>Chordata</taxon>
        <taxon>Craniata</taxon>
        <taxon>Vertebrata</taxon>
        <taxon>Euteleostomi</taxon>
        <taxon>Lepidosauria</taxon>
        <taxon>Squamata</taxon>
        <taxon>Bifurcata</taxon>
        <taxon>Unidentata</taxon>
        <taxon>Episquamata</taxon>
        <taxon>Toxicofera</taxon>
        <taxon>Serpentes</taxon>
        <taxon>Colubroidea</taxon>
        <taxon>Viperidae</taxon>
        <taxon>Crotalinae</taxon>
        <taxon>Trimeresurus</taxon>
    </lineage>
</organism>
<dbReference type="EMBL" id="AF354915">
    <property type="protein sequence ID" value="AAQ15157.1"/>
    <property type="molecule type" value="mRNA"/>
</dbReference>
<dbReference type="SMR" id="Q71RR0"/>
<dbReference type="GO" id="GO:0005576">
    <property type="term" value="C:extracellular region"/>
    <property type="evidence" value="ECO:0007669"/>
    <property type="project" value="UniProtKB-SubCell"/>
</dbReference>
<dbReference type="GO" id="GO:0046872">
    <property type="term" value="F:metal ion binding"/>
    <property type="evidence" value="ECO:0007669"/>
    <property type="project" value="UniProtKB-KW"/>
</dbReference>
<dbReference type="GO" id="GO:0090729">
    <property type="term" value="F:toxin activity"/>
    <property type="evidence" value="ECO:0007669"/>
    <property type="project" value="UniProtKB-KW"/>
</dbReference>
<dbReference type="FunFam" id="3.10.100.10:FF:000087">
    <property type="entry name" value="Snaclec rhodocetin subunit delta"/>
    <property type="match status" value="1"/>
</dbReference>
<dbReference type="Gene3D" id="3.10.100.10">
    <property type="entry name" value="Mannose-Binding Protein A, subunit A"/>
    <property type="match status" value="1"/>
</dbReference>
<dbReference type="InterPro" id="IPR001304">
    <property type="entry name" value="C-type_lectin-like"/>
</dbReference>
<dbReference type="InterPro" id="IPR016186">
    <property type="entry name" value="C-type_lectin-like/link_sf"/>
</dbReference>
<dbReference type="InterPro" id="IPR050111">
    <property type="entry name" value="C-type_lectin/snaclec_domain"/>
</dbReference>
<dbReference type="InterPro" id="IPR018378">
    <property type="entry name" value="C-type_lectin_CS"/>
</dbReference>
<dbReference type="InterPro" id="IPR016187">
    <property type="entry name" value="CTDL_fold"/>
</dbReference>
<dbReference type="PANTHER" id="PTHR22803">
    <property type="entry name" value="MANNOSE, PHOSPHOLIPASE, LECTIN RECEPTOR RELATED"/>
    <property type="match status" value="1"/>
</dbReference>
<dbReference type="Pfam" id="PF00059">
    <property type="entry name" value="Lectin_C"/>
    <property type="match status" value="1"/>
</dbReference>
<dbReference type="PRINTS" id="PR01504">
    <property type="entry name" value="PNCREATITSAP"/>
</dbReference>
<dbReference type="SMART" id="SM00034">
    <property type="entry name" value="CLECT"/>
    <property type="match status" value="1"/>
</dbReference>
<dbReference type="SUPFAM" id="SSF56436">
    <property type="entry name" value="C-type lectin-like"/>
    <property type="match status" value="1"/>
</dbReference>
<dbReference type="PROSITE" id="PS00615">
    <property type="entry name" value="C_TYPE_LECTIN_1"/>
    <property type="match status" value="1"/>
</dbReference>
<dbReference type="PROSITE" id="PS50041">
    <property type="entry name" value="C_TYPE_LECTIN_2"/>
    <property type="match status" value="1"/>
</dbReference>
<keyword id="KW-1203">Blood coagulation cascade inhibiting toxin</keyword>
<keyword id="KW-0106">Calcium</keyword>
<keyword id="KW-1015">Disulfide bond</keyword>
<keyword id="KW-1199">Hemostasis impairing toxin</keyword>
<keyword id="KW-0479">Metal-binding</keyword>
<keyword id="KW-0964">Secreted</keyword>
<keyword id="KW-0732">Signal</keyword>
<keyword id="KW-0800">Toxin</keyword>
<comment type="function">
    <text evidence="1">Anticoagulant protein which binds to the gamma-carboxyglutamic acid-domain regions of factors IX (F9) and factor X (F10) in the presence of calcium with a 1 to 1 stoichiometry.</text>
</comment>
<comment type="subunit">
    <text evidence="1">Heterodimer of subunits A and B3; disulfide-linked.</text>
</comment>
<comment type="subcellular location">
    <subcellularLocation>
        <location evidence="1">Secreted</location>
    </subcellularLocation>
</comment>
<comment type="tissue specificity">
    <text>Expressed by the venom gland.</text>
</comment>
<comment type="miscellaneous">
    <text evidence="1">Calcium is required for ligand binding.</text>
</comment>
<comment type="similarity">
    <text evidence="3">Belongs to the snaclec family.</text>
</comment>
<reference key="1">
    <citation type="submission" date="2001-03" db="EMBL/GenBank/DDBJ databases">
        <title>Cloning and characterization of C-type lectins from Trimeresurus stejnegeri venom.</title>
        <authorList>
            <person name="Lee W.-H."/>
            <person name="Liu H."/>
            <person name="Zhang Y."/>
        </authorList>
    </citation>
    <scope>NUCLEOTIDE SEQUENCE [MRNA]</scope>
    <source>
        <tissue>Venom gland</tissue>
    </source>
</reference>
<feature type="signal peptide" evidence="1">
    <location>
        <begin position="1" status="less than"/>
        <end position="8"/>
    </location>
</feature>
<feature type="chain" id="PRO_0000356316" description="Snaclec coagulation factor IX/factor X-binding protein subunit B3">
    <location>
        <begin position="9"/>
        <end position="129"/>
    </location>
</feature>
<feature type="domain" description="C-type lectin" evidence="2">
    <location>
        <begin position="17"/>
        <end position="128"/>
    </location>
</feature>
<feature type="disulfide bond" evidence="2">
    <location>
        <begin position="10"/>
        <end position="21"/>
    </location>
</feature>
<feature type="disulfide bond" evidence="2">
    <location>
        <begin position="38"/>
        <end position="127"/>
    </location>
</feature>
<feature type="disulfide bond" description="Interchain (with C-102 in subunit A)" evidence="2">
    <location>
        <position position="83"/>
    </location>
</feature>
<feature type="disulfide bond" evidence="2">
    <location>
        <begin position="104"/>
        <end position="119"/>
    </location>
</feature>
<feature type="non-terminal residue">
    <location>
        <position position="1"/>
    </location>
</feature>
<name>SL9B3_TRIST</name>
<accession>Q71RR0</accession>
<protein>
    <recommendedName>
        <fullName>Snaclec coagulation factor IX/factor X-binding protein subunit B3</fullName>
        <shortName>IX/X-bp subunit B3</shortName>
    </recommendedName>
</protein>
<evidence type="ECO:0000250" key="1"/>
<evidence type="ECO:0000255" key="2">
    <source>
        <dbReference type="PROSITE-ProRule" id="PRU00040"/>
    </source>
</evidence>
<evidence type="ECO:0000305" key="3"/>
<proteinExistence type="evidence at transcript level"/>
<sequence length="129" mass="15019">LSLSGTAADCLSGWSSYEGHCYKPFNELKNWADAEKFCTEQHAGGHLVSFQSSEEADFVVKLAFQTFDHSIFWMGLSNVWNQCNWQWSNAAMLRYKAWAEESYCVYFKSTNNKWRSRSCRMMANFVCEF</sequence>